<reference key="1">
    <citation type="journal article" date="1994" name="Plant Physiol.">
        <title>Complete nucleotide sequence of the maize (Zea mays L.) sucrose synthase 2 cDNA.</title>
        <authorList>
            <person name="Huang X.-F."/>
            <person name="Nguyen-Quoc B."/>
            <person name="Chourey P.S."/>
            <person name="Yelle S."/>
        </authorList>
    </citation>
    <scope>NUCLEOTIDE SEQUENCE [MRNA]</scope>
</reference>
<reference key="2">
    <citation type="submission" date="1994-09" db="EMBL/GenBank/DDBJ databases">
        <title>Maize sucrose synthase 2: gene eequence and expression in the developing leaf.</title>
        <authorList>
            <person name="Nguyen-Quoc B."/>
            <person name="Huang X.-F."/>
            <person name="Krivitzky M."/>
            <person name="Yelle S."/>
            <person name="Lecharny A."/>
        </authorList>
    </citation>
    <scope>NUCLEOTIDE SEQUENCE</scope>
    <source>
        <strain>cv. Wisconsin 22</strain>
    </source>
</reference>
<reference key="3">
    <citation type="journal article" date="1996" name="Plant Physiol.">
        <title>Phosphorylation of serine-15 of maize leaf sucrose synthase. Occurrence in vivo and possible regulatory significance.</title>
        <authorList>
            <person name="Huber S.C."/>
            <person name="Huber J.L."/>
            <person name="Liao P.-C."/>
            <person name="Gage D.A."/>
            <person name="McMichael R.W. Jr."/>
            <person name="Chourey P.S."/>
            <person name="Hannah L.C."/>
            <person name="Koch K."/>
        </authorList>
    </citation>
    <scope>PHOSPHORYLATION AT SER-15</scope>
    <source>
        <tissue>Leaf</tissue>
    </source>
</reference>
<dbReference type="EC" id="2.4.1.13"/>
<dbReference type="EMBL" id="L22296">
    <property type="protein sequence ID" value="AAA33514.1"/>
    <property type="molecule type" value="mRNA"/>
</dbReference>
<dbReference type="EMBL" id="L33244">
    <property type="protein sequence ID" value="AAA33515.1"/>
    <property type="molecule type" value="Genomic_DNA"/>
</dbReference>
<dbReference type="RefSeq" id="NP_001105323.1">
    <property type="nucleotide sequence ID" value="NM_001111853.1"/>
</dbReference>
<dbReference type="SMR" id="P49036"/>
<dbReference type="FunCoup" id="P49036">
    <property type="interactions" value="209"/>
</dbReference>
<dbReference type="STRING" id="4577.P49036"/>
<dbReference type="CAZy" id="GT4">
    <property type="family name" value="Glycosyltransferase Family 4"/>
</dbReference>
<dbReference type="iPTMnet" id="P49036"/>
<dbReference type="PaxDb" id="4577-GRMZM2G152908_P01"/>
<dbReference type="GeneID" id="542247"/>
<dbReference type="KEGG" id="zma:542247"/>
<dbReference type="MaizeGDB" id="13861"/>
<dbReference type="eggNOG" id="KOG0853">
    <property type="taxonomic scope" value="Eukaryota"/>
</dbReference>
<dbReference type="InParanoid" id="P49036"/>
<dbReference type="OrthoDB" id="937291at2759"/>
<dbReference type="Proteomes" id="UP000007305">
    <property type="component" value="Unplaced"/>
</dbReference>
<dbReference type="ExpressionAtlas" id="P49036">
    <property type="expression patterns" value="baseline and differential"/>
</dbReference>
<dbReference type="GO" id="GO:0016157">
    <property type="term" value="F:sucrose synthase activity"/>
    <property type="evidence" value="ECO:0000318"/>
    <property type="project" value="GO_Central"/>
</dbReference>
<dbReference type="GO" id="GO:0005985">
    <property type="term" value="P:sucrose metabolic process"/>
    <property type="evidence" value="ECO:0007669"/>
    <property type="project" value="InterPro"/>
</dbReference>
<dbReference type="FunFam" id="1.20.120.1230:FF:000001">
    <property type="entry name" value="Sucrose synthase"/>
    <property type="match status" value="1"/>
</dbReference>
<dbReference type="FunFam" id="3.10.450.330:FF:000001">
    <property type="entry name" value="Sucrose synthase"/>
    <property type="match status" value="1"/>
</dbReference>
<dbReference type="FunFam" id="3.40.50.2000:FF:000004">
    <property type="entry name" value="Sucrose synthase"/>
    <property type="match status" value="1"/>
</dbReference>
<dbReference type="Gene3D" id="1.20.120.1230">
    <property type="match status" value="1"/>
</dbReference>
<dbReference type="Gene3D" id="3.10.450.330">
    <property type="match status" value="1"/>
</dbReference>
<dbReference type="Gene3D" id="3.40.50.2000">
    <property type="entry name" value="Glycogen Phosphorylase B"/>
    <property type="match status" value="2"/>
</dbReference>
<dbReference type="InterPro" id="IPR001296">
    <property type="entry name" value="Glyco_trans_1"/>
</dbReference>
<dbReference type="InterPro" id="IPR000368">
    <property type="entry name" value="Sucrose_synth_GT-B1"/>
</dbReference>
<dbReference type="InterPro" id="IPR012820">
    <property type="entry name" value="Sucrose_synthase_pln/cyn"/>
</dbReference>
<dbReference type="InterPro" id="IPR056736">
    <property type="entry name" value="SUS_EPBD"/>
</dbReference>
<dbReference type="InterPro" id="IPR056735">
    <property type="entry name" value="SUS_N"/>
</dbReference>
<dbReference type="NCBIfam" id="TIGR02470">
    <property type="entry name" value="sucr_synth"/>
    <property type="match status" value="1"/>
</dbReference>
<dbReference type="PANTHER" id="PTHR45839">
    <property type="match status" value="1"/>
</dbReference>
<dbReference type="PANTHER" id="PTHR45839:SF29">
    <property type="entry name" value="SUCROSE SYNTHASE 1"/>
    <property type="match status" value="1"/>
</dbReference>
<dbReference type="Pfam" id="PF00534">
    <property type="entry name" value="Glycos_transf_1"/>
    <property type="match status" value="1"/>
</dbReference>
<dbReference type="Pfam" id="PF00862">
    <property type="entry name" value="GT-B_Sucrose_synth"/>
    <property type="match status" value="1"/>
</dbReference>
<dbReference type="Pfam" id="PF24862">
    <property type="entry name" value="SUS_EPBD"/>
    <property type="match status" value="1"/>
</dbReference>
<dbReference type="Pfam" id="PF24861">
    <property type="entry name" value="SUS_N"/>
    <property type="match status" value="1"/>
</dbReference>
<dbReference type="SUPFAM" id="SSF53756">
    <property type="entry name" value="UDP-Glycosyltransferase/glycogen phosphorylase"/>
    <property type="match status" value="1"/>
</dbReference>
<comment type="function">
    <text>Sucrose-cleaving enzyme that provides UDP-glucose and fructose for various metabolic pathways.</text>
</comment>
<comment type="catalytic activity">
    <reaction>
        <text>an NDP-alpha-D-glucose + D-fructose = a ribonucleoside 5'-diphosphate + sucrose + H(+)</text>
        <dbReference type="Rhea" id="RHEA:16241"/>
        <dbReference type="ChEBI" id="CHEBI:15378"/>
        <dbReference type="ChEBI" id="CHEBI:17992"/>
        <dbReference type="ChEBI" id="CHEBI:37721"/>
        <dbReference type="ChEBI" id="CHEBI:57930"/>
        <dbReference type="ChEBI" id="CHEBI:76533"/>
        <dbReference type="EC" id="2.4.1.13"/>
    </reaction>
</comment>
<comment type="similarity">
    <text evidence="3">Belongs to the glycosyltransferase 1 family. Plant sucrose synthase subfamily.</text>
</comment>
<organism>
    <name type="scientific">Zea mays</name>
    <name type="common">Maize</name>
    <dbReference type="NCBI Taxonomy" id="4577"/>
    <lineage>
        <taxon>Eukaryota</taxon>
        <taxon>Viridiplantae</taxon>
        <taxon>Streptophyta</taxon>
        <taxon>Embryophyta</taxon>
        <taxon>Tracheophyta</taxon>
        <taxon>Spermatophyta</taxon>
        <taxon>Magnoliopsida</taxon>
        <taxon>Liliopsida</taxon>
        <taxon>Poales</taxon>
        <taxon>Poaceae</taxon>
        <taxon>PACMAD clade</taxon>
        <taxon>Panicoideae</taxon>
        <taxon>Andropogonodae</taxon>
        <taxon>Andropogoneae</taxon>
        <taxon>Tripsacinae</taxon>
        <taxon>Zea</taxon>
    </lineage>
</organism>
<proteinExistence type="evidence at protein level"/>
<sequence>MGEGAGDRVLSRLHSVRERIGDSLSAHPNELVAVFTRLKNLGKGMLQPHQIIAEYNNAIPEAEREKLKDGAFEDVLRAAQEAIVIPPWVALAIRPRPGVWEYVRVNVSELAVEELRVPEYLQFKEQLVEEGPNNNFVLELDFEPFNASFPRPSLSKSIGNGVQFLNRHLSSKLFHDKESMYPLLNFLRAHNYKGMTMMLNDRIRSLSALQGALRKAEEHLSTLQADTPYSEFHHRFQELGLEKGWGDCAKRAQETIHLLLDLLEAPDPSTLEKFLGTIPMVFNVVILSPHGYFAQANVLGYPDTGGQVVYILDQVRAMENEMLLRIKQCGLDITPKILIVTRLLPDATGTTCGQRLEKVLGTEHCHILRVPFRTENGIVRKWISRFEVWPYLETYTDDVAHEIAGELQANPDLIIGNYSDGNLVACLLAHKMGVTHCTIAHALEKTKYPNSDLYWKKFEDHYHFSCQFTTDLIAMNHADFIITSTFQEIAGNKDTVGQYESHMAFTMPGLYRVVHGIDVFDPKFNIVSPGADLSIYFPYTESHKRLTSLHPEIEELLYSQTENTEHKFVLNDRNKPIIFSMARLDRVKNLTGLVELYGRNKRLQELVNLVVVCGDHGNPSKDKEEQAEFKKMFDLIEQYNLNGHIRWISAQMNRVRNGELYRYICDTKGAFVQPAFYEAFGLTVVEAMTCGLPTFATAYGGPAEIIVHGVSGYHIDPYQGDKASALLVDFFDKCQAEPSHWSKISQGGLQRIEEKYTWKLYSERLMTLTGVYGFWKYVSNLERRETRRYLEMLYALKYRTMASTVPLAVEGEPSSK</sequence>
<name>SUS2_MAIZE</name>
<feature type="chain" id="PRO_0000204653" description="Sucrose synthase 2">
    <location>
        <begin position="1"/>
        <end position="816"/>
    </location>
</feature>
<feature type="region of interest" description="GT-B glycosyltransferase" evidence="1">
    <location>
        <begin position="280"/>
        <end position="757"/>
    </location>
</feature>
<feature type="modified residue" description="Phosphoserine" evidence="2">
    <location>
        <position position="15"/>
    </location>
</feature>
<keyword id="KW-0328">Glycosyltransferase</keyword>
<keyword id="KW-0597">Phosphoprotein</keyword>
<keyword id="KW-1185">Reference proteome</keyword>
<keyword id="KW-0808">Transferase</keyword>
<evidence type="ECO:0000250" key="1">
    <source>
        <dbReference type="UniProtKB" id="P49040"/>
    </source>
</evidence>
<evidence type="ECO:0000269" key="2">
    <source>
    </source>
</evidence>
<evidence type="ECO:0000305" key="3"/>
<accession>P49036</accession>
<protein>
    <recommendedName>
        <fullName>Sucrose synthase 2</fullName>
        <ecNumber>2.4.1.13</ecNumber>
    </recommendedName>
    <alternativeName>
        <fullName>Sucrose-UDP glucosyltransferase 2</fullName>
    </alternativeName>
</protein>
<gene>
    <name type="primary">SUS1</name>
</gene>